<feature type="chain" id="PRO_0000167098" description="Cysteine synthase">
    <location>
        <begin position="1"/>
        <end position="310"/>
    </location>
</feature>
<feature type="binding site" evidence="1">
    <location>
        <position position="76"/>
    </location>
    <ligand>
        <name>pyridoxal 5'-phosphate</name>
        <dbReference type="ChEBI" id="CHEBI:597326"/>
    </ligand>
</feature>
<feature type="binding site" evidence="1">
    <location>
        <begin position="180"/>
        <end position="184"/>
    </location>
    <ligand>
        <name>pyridoxal 5'-phosphate</name>
        <dbReference type="ChEBI" id="CHEBI:597326"/>
    </ligand>
</feature>
<feature type="binding site" evidence="1">
    <location>
        <position position="268"/>
    </location>
    <ligand>
        <name>pyridoxal 5'-phosphate</name>
        <dbReference type="ChEBI" id="CHEBI:597326"/>
    </ligand>
</feature>
<feature type="modified residue" description="N6-(pyridoxal phosphate)lysine" evidence="1">
    <location>
        <position position="46"/>
    </location>
</feature>
<accession>Q6GJF8</accession>
<gene>
    <name type="primary">cysK</name>
    <name type="ordered locus">SAR0514</name>
</gene>
<name>CYSK_STAAR</name>
<keyword id="KW-0028">Amino-acid biosynthesis</keyword>
<keyword id="KW-0198">Cysteine biosynthesis</keyword>
<keyword id="KW-0663">Pyridoxal phosphate</keyword>
<keyword id="KW-0808">Transferase</keyword>
<proteinExistence type="inferred from homology"/>
<sequence length="310" mass="32976">MAQKPVDNITQIIGGTPVVKLRNVVDDNAADVYVKLEYQNPGGSVKDRIALAMIEKAEREGKIKPGDTIVEPTSGNTGIGLAFVCAAKGYKAVFTMPETMSQERRNLLKAYGAELVLTPGSEAMKGAIKKAKELKEEHGYFEPQQFENPANPEVHELTTGPELLQQFEGKTIDAFLAGVGTGGTLSGVGKVLKKEYPNIEIVAIEPEASPVLSGGEPGPHKLQGLGAGFIPGTLNTEIYDSIIKVGNDTAMEMSRRVAKEEGILAGISSGAAIYAAIQKAKELGKGKTVVTVLPSNGERYLSTPLYSFDD</sequence>
<organism>
    <name type="scientific">Staphylococcus aureus (strain MRSA252)</name>
    <dbReference type="NCBI Taxonomy" id="282458"/>
    <lineage>
        <taxon>Bacteria</taxon>
        <taxon>Bacillati</taxon>
        <taxon>Bacillota</taxon>
        <taxon>Bacilli</taxon>
        <taxon>Bacillales</taxon>
        <taxon>Staphylococcaceae</taxon>
        <taxon>Staphylococcus</taxon>
    </lineage>
</organism>
<dbReference type="EC" id="2.5.1.47"/>
<dbReference type="EMBL" id="BX571856">
    <property type="protein sequence ID" value="CAG39536.1"/>
    <property type="molecule type" value="Genomic_DNA"/>
</dbReference>
<dbReference type="RefSeq" id="WP_000057594.1">
    <property type="nucleotide sequence ID" value="NC_002952.2"/>
</dbReference>
<dbReference type="SMR" id="Q6GJF8"/>
<dbReference type="KEGG" id="sar:SAR0514"/>
<dbReference type="HOGENOM" id="CLU_021018_1_0_9"/>
<dbReference type="UniPathway" id="UPA00136">
    <property type="reaction ID" value="UER00200"/>
</dbReference>
<dbReference type="Proteomes" id="UP000000596">
    <property type="component" value="Chromosome"/>
</dbReference>
<dbReference type="GO" id="GO:0004124">
    <property type="term" value="F:cysteine synthase activity"/>
    <property type="evidence" value="ECO:0007669"/>
    <property type="project" value="UniProtKB-EC"/>
</dbReference>
<dbReference type="GO" id="GO:0006535">
    <property type="term" value="P:cysteine biosynthetic process from serine"/>
    <property type="evidence" value="ECO:0007669"/>
    <property type="project" value="InterPro"/>
</dbReference>
<dbReference type="CDD" id="cd01561">
    <property type="entry name" value="CBS_like"/>
    <property type="match status" value="1"/>
</dbReference>
<dbReference type="FunFam" id="3.40.50.1100:FF:000003">
    <property type="entry name" value="Cystathionine beta-synthase"/>
    <property type="match status" value="1"/>
</dbReference>
<dbReference type="FunFam" id="3.40.50.1100:FF:000118">
    <property type="entry name" value="Related to CYS4-cystathionine beta-synthase"/>
    <property type="match status" value="1"/>
</dbReference>
<dbReference type="Gene3D" id="3.40.50.1100">
    <property type="match status" value="2"/>
</dbReference>
<dbReference type="InterPro" id="IPR005856">
    <property type="entry name" value="Cys_synth"/>
</dbReference>
<dbReference type="InterPro" id="IPR050214">
    <property type="entry name" value="Cys_Synth/Cystath_Beta-Synth"/>
</dbReference>
<dbReference type="InterPro" id="IPR005859">
    <property type="entry name" value="CysK"/>
</dbReference>
<dbReference type="InterPro" id="IPR001216">
    <property type="entry name" value="P-phosphate_BS"/>
</dbReference>
<dbReference type="InterPro" id="IPR001926">
    <property type="entry name" value="TrpB-like_PALP"/>
</dbReference>
<dbReference type="InterPro" id="IPR036052">
    <property type="entry name" value="TrpB-like_PALP_sf"/>
</dbReference>
<dbReference type="NCBIfam" id="TIGR01139">
    <property type="entry name" value="cysK"/>
    <property type="match status" value="1"/>
</dbReference>
<dbReference type="NCBIfam" id="TIGR01136">
    <property type="entry name" value="cysKM"/>
    <property type="match status" value="1"/>
</dbReference>
<dbReference type="PANTHER" id="PTHR10314">
    <property type="entry name" value="CYSTATHIONINE BETA-SYNTHASE"/>
    <property type="match status" value="1"/>
</dbReference>
<dbReference type="Pfam" id="PF00291">
    <property type="entry name" value="PALP"/>
    <property type="match status" value="1"/>
</dbReference>
<dbReference type="SUPFAM" id="SSF53686">
    <property type="entry name" value="Tryptophan synthase beta subunit-like PLP-dependent enzymes"/>
    <property type="match status" value="1"/>
</dbReference>
<dbReference type="PROSITE" id="PS00901">
    <property type="entry name" value="CYS_SYNTHASE"/>
    <property type="match status" value="1"/>
</dbReference>
<reference key="1">
    <citation type="journal article" date="2004" name="Proc. Natl. Acad. Sci. U.S.A.">
        <title>Complete genomes of two clinical Staphylococcus aureus strains: evidence for the rapid evolution of virulence and drug resistance.</title>
        <authorList>
            <person name="Holden M.T.G."/>
            <person name="Feil E.J."/>
            <person name="Lindsay J.A."/>
            <person name="Peacock S.J."/>
            <person name="Day N.P.J."/>
            <person name="Enright M.C."/>
            <person name="Foster T.J."/>
            <person name="Moore C.E."/>
            <person name="Hurst L."/>
            <person name="Atkin R."/>
            <person name="Barron A."/>
            <person name="Bason N."/>
            <person name="Bentley S.D."/>
            <person name="Chillingworth C."/>
            <person name="Chillingworth T."/>
            <person name="Churcher C."/>
            <person name="Clark L."/>
            <person name="Corton C."/>
            <person name="Cronin A."/>
            <person name="Doggett J."/>
            <person name="Dowd L."/>
            <person name="Feltwell T."/>
            <person name="Hance Z."/>
            <person name="Harris B."/>
            <person name="Hauser H."/>
            <person name="Holroyd S."/>
            <person name="Jagels K."/>
            <person name="James K.D."/>
            <person name="Lennard N."/>
            <person name="Line A."/>
            <person name="Mayes R."/>
            <person name="Moule S."/>
            <person name="Mungall K."/>
            <person name="Ormond D."/>
            <person name="Quail M.A."/>
            <person name="Rabbinowitsch E."/>
            <person name="Rutherford K.M."/>
            <person name="Sanders M."/>
            <person name="Sharp S."/>
            <person name="Simmonds M."/>
            <person name="Stevens K."/>
            <person name="Whitehead S."/>
            <person name="Barrell B.G."/>
            <person name="Spratt B.G."/>
            <person name="Parkhill J."/>
        </authorList>
    </citation>
    <scope>NUCLEOTIDE SEQUENCE [LARGE SCALE GENOMIC DNA]</scope>
    <source>
        <strain>MRSA252</strain>
    </source>
</reference>
<comment type="catalytic activity">
    <reaction>
        <text>O-acetyl-L-serine + hydrogen sulfide = L-cysteine + acetate</text>
        <dbReference type="Rhea" id="RHEA:14829"/>
        <dbReference type="ChEBI" id="CHEBI:29919"/>
        <dbReference type="ChEBI" id="CHEBI:30089"/>
        <dbReference type="ChEBI" id="CHEBI:35235"/>
        <dbReference type="ChEBI" id="CHEBI:58340"/>
        <dbReference type="EC" id="2.5.1.47"/>
    </reaction>
</comment>
<comment type="cofactor">
    <cofactor evidence="1">
        <name>pyridoxal 5'-phosphate</name>
        <dbReference type="ChEBI" id="CHEBI:597326"/>
    </cofactor>
</comment>
<comment type="pathway">
    <text>Amino-acid biosynthesis; L-cysteine biosynthesis; L-cysteine from L-serine: step 2/2.</text>
</comment>
<comment type="subunit">
    <text evidence="1">Homodimer.</text>
</comment>
<comment type="similarity">
    <text evidence="2">Belongs to the cysteine synthase/cystathionine beta-synthase family.</text>
</comment>
<evidence type="ECO:0000250" key="1"/>
<evidence type="ECO:0000305" key="2"/>
<protein>
    <recommendedName>
        <fullName>Cysteine synthase</fullName>
        <shortName>CSase</shortName>
        <ecNumber>2.5.1.47</ecNumber>
    </recommendedName>
    <alternativeName>
        <fullName>O-acetylserine (thiol)-lyase</fullName>
        <shortName>OAS-TL</shortName>
    </alternativeName>
    <alternativeName>
        <fullName>O-acetylserine sulfhydrylase</fullName>
    </alternativeName>
</protein>